<gene>
    <name type="primary">btuR</name>
    <name type="synonym">cobA</name>
    <name type="ordered locus">b1270</name>
    <name type="ordered locus">JW1262</name>
</gene>
<protein>
    <recommendedName>
        <fullName>Corrinoid adenosyltransferase</fullName>
        <ecNumber>2.5.1.17</ecNumber>
    </recommendedName>
    <alternativeName>
        <fullName>Cob(II)alamin adenosyltransferase</fullName>
    </alternativeName>
    <alternativeName>
        <fullName>Cob(II)yrinic acid a,c-diamide adenosyltransferase</fullName>
    </alternativeName>
    <alternativeName>
        <fullName>Cobinamide/cobalamin adenosyltransferase</fullName>
    </alternativeName>
</protein>
<name>BTUR_ECOLI</name>
<feature type="chain" id="PRO_0000065009" description="Corrinoid adenosyltransferase">
    <location>
        <begin position="1"/>
        <end position="196"/>
    </location>
</feature>
<feature type="binding site" evidence="1">
    <location>
        <begin position="36"/>
        <end position="42"/>
    </location>
    <ligand>
        <name>ATP</name>
        <dbReference type="ChEBI" id="CHEBI:30616"/>
    </ligand>
</feature>
<organism>
    <name type="scientific">Escherichia coli (strain K12)</name>
    <dbReference type="NCBI Taxonomy" id="83333"/>
    <lineage>
        <taxon>Bacteria</taxon>
        <taxon>Pseudomonadati</taxon>
        <taxon>Pseudomonadota</taxon>
        <taxon>Gammaproteobacteria</taxon>
        <taxon>Enterobacterales</taxon>
        <taxon>Enterobacteriaceae</taxon>
        <taxon>Escherichia</taxon>
    </lineage>
</organism>
<sequence>MSDERYQQRQQRVKEKVDARVAQAQDERGIIIVFTGNGKGKTTAAFGTATRAVGHGKKVGVVQFIKGTWPNGERNLLEPHGVEFQVMATGFTWDTQNRESDTAACREVWQHAKRMLADSSLDMVLLDELTYMVAYDYLPLEEVVQALNERPHQQTVIITGRGCHRDILELADTVSELRPVKHAFDAGVKAQIGIDY</sequence>
<accession>P0A9H5</accession>
<accession>P13040</accession>
<keyword id="KW-0067">ATP-binding</keyword>
<keyword id="KW-0169">Cobalamin biosynthesis</keyword>
<keyword id="KW-0963">Cytoplasm</keyword>
<keyword id="KW-0547">Nucleotide-binding</keyword>
<keyword id="KW-0627">Porphyrin biosynthesis</keyword>
<keyword id="KW-1185">Reference proteome</keyword>
<keyword id="KW-0808">Transferase</keyword>
<evidence type="ECO:0000250" key="1"/>
<evidence type="ECO:0000305" key="2"/>
<dbReference type="EC" id="2.5.1.17"/>
<dbReference type="EMBL" id="M21528">
    <property type="protein sequence ID" value="AAA23530.1"/>
    <property type="molecule type" value="Genomic_DNA"/>
</dbReference>
<dbReference type="EMBL" id="U00096">
    <property type="protein sequence ID" value="AAC74352.1"/>
    <property type="molecule type" value="Genomic_DNA"/>
</dbReference>
<dbReference type="EMBL" id="AP009048">
    <property type="protein sequence ID" value="BAA14807.1"/>
    <property type="molecule type" value="Genomic_DNA"/>
</dbReference>
<dbReference type="PIR" id="A64875">
    <property type="entry name" value="A64875"/>
</dbReference>
<dbReference type="RefSeq" id="NP_415786.1">
    <property type="nucleotide sequence ID" value="NC_000913.3"/>
</dbReference>
<dbReference type="SMR" id="P0A9H5"/>
<dbReference type="BioGRID" id="4259575">
    <property type="interactions" value="26"/>
</dbReference>
<dbReference type="FunCoup" id="P0A9H5">
    <property type="interactions" value="238"/>
</dbReference>
<dbReference type="IntAct" id="P0A9H5">
    <property type="interactions" value="14"/>
</dbReference>
<dbReference type="STRING" id="511145.b1270"/>
<dbReference type="jPOST" id="P0A9H5"/>
<dbReference type="PaxDb" id="511145-b1270"/>
<dbReference type="EnsemblBacteria" id="AAC74352">
    <property type="protein sequence ID" value="AAC74352"/>
    <property type="gene ID" value="b1270"/>
</dbReference>
<dbReference type="GeneID" id="945839"/>
<dbReference type="KEGG" id="ecj:JW1262"/>
<dbReference type="KEGG" id="eco:b1270"/>
<dbReference type="KEGG" id="ecoc:C3026_07440"/>
<dbReference type="PATRIC" id="fig|1411691.4.peg.1014"/>
<dbReference type="EchoBASE" id="EB0128"/>
<dbReference type="eggNOG" id="COG2109">
    <property type="taxonomic scope" value="Bacteria"/>
</dbReference>
<dbReference type="HOGENOM" id="CLU_088595_0_0_6"/>
<dbReference type="InParanoid" id="P0A9H5"/>
<dbReference type="OMA" id="HAMGEGF"/>
<dbReference type="OrthoDB" id="9810309at2"/>
<dbReference type="PhylomeDB" id="P0A9H5"/>
<dbReference type="BioCyc" id="EcoCyc:COBALADENOSYLTRANS-MONOMER"/>
<dbReference type="UniPathway" id="UPA00148">
    <property type="reaction ID" value="UER00233"/>
</dbReference>
<dbReference type="PRO" id="PR:P0A9H5"/>
<dbReference type="Proteomes" id="UP000000625">
    <property type="component" value="Chromosome"/>
</dbReference>
<dbReference type="GO" id="GO:0005737">
    <property type="term" value="C:cytoplasm"/>
    <property type="evidence" value="ECO:0007669"/>
    <property type="project" value="UniProtKB-SubCell"/>
</dbReference>
<dbReference type="GO" id="GO:0005524">
    <property type="term" value="F:ATP binding"/>
    <property type="evidence" value="ECO:0007669"/>
    <property type="project" value="UniProtKB-KW"/>
</dbReference>
<dbReference type="GO" id="GO:0008817">
    <property type="term" value="F:corrinoid adenosyltransferase activity"/>
    <property type="evidence" value="ECO:0000250"/>
    <property type="project" value="EcoCyc"/>
</dbReference>
<dbReference type="GO" id="GO:0019250">
    <property type="term" value="P:aerobic cobalamin biosynthetic process"/>
    <property type="evidence" value="ECO:0000315"/>
    <property type="project" value="EcoCyc"/>
</dbReference>
<dbReference type="GO" id="GO:0009236">
    <property type="term" value="P:cobalamin biosynthetic process"/>
    <property type="evidence" value="ECO:0000315"/>
    <property type="project" value="EcoCyc"/>
</dbReference>
<dbReference type="GO" id="GO:0006779">
    <property type="term" value="P:porphyrin-containing compound biosynthetic process"/>
    <property type="evidence" value="ECO:0007669"/>
    <property type="project" value="UniProtKB-KW"/>
</dbReference>
<dbReference type="CDD" id="cd00561">
    <property type="entry name" value="CobA_ACA"/>
    <property type="match status" value="1"/>
</dbReference>
<dbReference type="FunFam" id="3.40.50.300:FF:000937">
    <property type="entry name" value="Corrinoid adenosyltransferase"/>
    <property type="match status" value="1"/>
</dbReference>
<dbReference type="Gene3D" id="3.40.50.300">
    <property type="entry name" value="P-loop containing nucleotide triphosphate hydrolases"/>
    <property type="match status" value="1"/>
</dbReference>
<dbReference type="InterPro" id="IPR003724">
    <property type="entry name" value="CblAdoTrfase_CobA"/>
</dbReference>
<dbReference type="InterPro" id="IPR025826">
    <property type="entry name" value="Co_AT_N_dom"/>
</dbReference>
<dbReference type="InterPro" id="IPR027417">
    <property type="entry name" value="P-loop_NTPase"/>
</dbReference>
<dbReference type="NCBIfam" id="TIGR00708">
    <property type="entry name" value="cobA"/>
    <property type="match status" value="1"/>
</dbReference>
<dbReference type="NCBIfam" id="NF004637">
    <property type="entry name" value="PRK05986.1"/>
    <property type="match status" value="1"/>
</dbReference>
<dbReference type="PANTHER" id="PTHR46638">
    <property type="entry name" value="CORRINOID ADENOSYLTRANSFERASE"/>
    <property type="match status" value="1"/>
</dbReference>
<dbReference type="PANTHER" id="PTHR46638:SF1">
    <property type="entry name" value="CORRINOID ADENOSYLTRANSFERASE"/>
    <property type="match status" value="1"/>
</dbReference>
<dbReference type="Pfam" id="PF12557">
    <property type="entry name" value="Co_AT_N"/>
    <property type="match status" value="1"/>
</dbReference>
<dbReference type="Pfam" id="PF02572">
    <property type="entry name" value="CobA_CobO_BtuR"/>
    <property type="match status" value="1"/>
</dbReference>
<dbReference type="PIRSF" id="PIRSF015617">
    <property type="entry name" value="Adensltrnsf_CobA"/>
    <property type="match status" value="1"/>
</dbReference>
<dbReference type="SUPFAM" id="SSF52540">
    <property type="entry name" value="P-loop containing nucleoside triphosphate hydrolases"/>
    <property type="match status" value="1"/>
</dbReference>
<comment type="function">
    <text evidence="1">Required for both de novo synthesis of the corrin ring for the assimilation of exogenous corrinoids. Participates in the adenosylation of a variety of incomplete and complete corrinoids (By similarity).</text>
</comment>
<comment type="catalytic activity">
    <reaction>
        <text>2 cob(II)yrinate a,c diamide + reduced [electron-transfer flavoprotein] + 2 ATP = 2 adenosylcob(III)yrinate a,c-diamide + 2 triphosphate + oxidized [electron-transfer flavoprotein] + 3 H(+)</text>
        <dbReference type="Rhea" id="RHEA:11528"/>
        <dbReference type="Rhea" id="RHEA-COMP:10685"/>
        <dbReference type="Rhea" id="RHEA-COMP:10686"/>
        <dbReference type="ChEBI" id="CHEBI:15378"/>
        <dbReference type="ChEBI" id="CHEBI:18036"/>
        <dbReference type="ChEBI" id="CHEBI:30616"/>
        <dbReference type="ChEBI" id="CHEBI:57692"/>
        <dbReference type="ChEBI" id="CHEBI:58307"/>
        <dbReference type="ChEBI" id="CHEBI:58503"/>
        <dbReference type="ChEBI" id="CHEBI:58537"/>
        <dbReference type="EC" id="2.5.1.17"/>
    </reaction>
</comment>
<comment type="catalytic activity">
    <reaction>
        <text>2 cob(II)alamin + reduced [electron-transfer flavoprotein] + 2 ATP = 2 adenosylcob(III)alamin + 2 triphosphate + oxidized [electron-transfer flavoprotein] + 3 H(+)</text>
        <dbReference type="Rhea" id="RHEA:28671"/>
        <dbReference type="Rhea" id="RHEA-COMP:10685"/>
        <dbReference type="Rhea" id="RHEA-COMP:10686"/>
        <dbReference type="ChEBI" id="CHEBI:15378"/>
        <dbReference type="ChEBI" id="CHEBI:16304"/>
        <dbReference type="ChEBI" id="CHEBI:18036"/>
        <dbReference type="ChEBI" id="CHEBI:18408"/>
        <dbReference type="ChEBI" id="CHEBI:30616"/>
        <dbReference type="ChEBI" id="CHEBI:57692"/>
        <dbReference type="ChEBI" id="CHEBI:58307"/>
        <dbReference type="EC" id="2.5.1.17"/>
    </reaction>
</comment>
<comment type="pathway">
    <text>Cofactor biosynthesis; adenosylcobalamin biosynthesis; adenosylcobalamin from cob(II)yrinate a,c-diamide: step 2/7.</text>
</comment>
<comment type="subcellular location">
    <subcellularLocation>
        <location>Cytoplasm</location>
    </subcellularLocation>
</comment>
<comment type="similarity">
    <text evidence="2">Belongs to the Cob(I)alamin adenosyltransferase family.</text>
</comment>
<reference key="1">
    <citation type="journal article" date="1989" name="J. Bacteriol.">
        <title>Altered cobalamin metabolism in Escherichia coli btuR mutants affects btuB gene regulation.</title>
        <authorList>
            <person name="Lundrigan M.D."/>
            <person name="Kadner R.J."/>
        </authorList>
    </citation>
    <scope>NUCLEOTIDE SEQUENCE [GENOMIC DNA]</scope>
    <source>
        <strain>K12</strain>
    </source>
</reference>
<reference key="2">
    <citation type="journal article" date="1996" name="DNA Res.">
        <title>A 570-kb DNA sequence of the Escherichia coli K-12 genome corresponding to the 28.0-40.1 min region on the linkage map.</title>
        <authorList>
            <person name="Aiba H."/>
            <person name="Baba T."/>
            <person name="Fujita K."/>
            <person name="Hayashi K."/>
            <person name="Inada T."/>
            <person name="Isono K."/>
            <person name="Itoh T."/>
            <person name="Kasai H."/>
            <person name="Kashimoto K."/>
            <person name="Kimura S."/>
            <person name="Kitakawa M."/>
            <person name="Kitagawa M."/>
            <person name="Makino K."/>
            <person name="Miki T."/>
            <person name="Mizobuchi K."/>
            <person name="Mori H."/>
            <person name="Mori T."/>
            <person name="Motomura K."/>
            <person name="Nakade S."/>
            <person name="Nakamura Y."/>
            <person name="Nashimoto H."/>
            <person name="Nishio Y."/>
            <person name="Oshima T."/>
            <person name="Saito N."/>
            <person name="Sampei G."/>
            <person name="Seki Y."/>
            <person name="Sivasundaram S."/>
            <person name="Tagami H."/>
            <person name="Takeda J."/>
            <person name="Takemoto K."/>
            <person name="Takeuchi Y."/>
            <person name="Wada C."/>
            <person name="Yamamoto Y."/>
            <person name="Horiuchi T."/>
        </authorList>
    </citation>
    <scope>NUCLEOTIDE SEQUENCE [LARGE SCALE GENOMIC DNA]</scope>
    <source>
        <strain>K12 / W3110 / ATCC 27325 / DSM 5911</strain>
    </source>
</reference>
<reference key="3">
    <citation type="journal article" date="1997" name="Science">
        <title>The complete genome sequence of Escherichia coli K-12.</title>
        <authorList>
            <person name="Blattner F.R."/>
            <person name="Plunkett G. III"/>
            <person name="Bloch C.A."/>
            <person name="Perna N.T."/>
            <person name="Burland V."/>
            <person name="Riley M."/>
            <person name="Collado-Vides J."/>
            <person name="Glasner J.D."/>
            <person name="Rode C.K."/>
            <person name="Mayhew G.F."/>
            <person name="Gregor J."/>
            <person name="Davis N.W."/>
            <person name="Kirkpatrick H.A."/>
            <person name="Goeden M.A."/>
            <person name="Rose D.J."/>
            <person name="Mau B."/>
            <person name="Shao Y."/>
        </authorList>
    </citation>
    <scope>NUCLEOTIDE SEQUENCE [LARGE SCALE GENOMIC DNA]</scope>
    <source>
        <strain>K12 / MG1655 / ATCC 47076</strain>
    </source>
</reference>
<reference key="4">
    <citation type="journal article" date="2006" name="Mol. Syst. Biol.">
        <title>Highly accurate genome sequences of Escherichia coli K-12 strains MG1655 and W3110.</title>
        <authorList>
            <person name="Hayashi K."/>
            <person name="Morooka N."/>
            <person name="Yamamoto Y."/>
            <person name="Fujita K."/>
            <person name="Isono K."/>
            <person name="Choi S."/>
            <person name="Ohtsubo E."/>
            <person name="Baba T."/>
            <person name="Wanner B.L."/>
            <person name="Mori H."/>
            <person name="Horiuchi T."/>
        </authorList>
    </citation>
    <scope>NUCLEOTIDE SEQUENCE [LARGE SCALE GENOMIC DNA]</scope>
    <source>
        <strain>K12 / W3110 / ATCC 27325 / DSM 5911</strain>
    </source>
</reference>
<proteinExistence type="inferred from homology"/>